<reference key="1">
    <citation type="journal article" date="1994" name="J. Mol. Biol.">
        <title>Structure and transcription of the L11-L1-L10-L12 ribosomal protein gene operon from the extreme thermophilic archaeon Sulfolobus acidocaldarius.</title>
        <authorList>
            <person name="Ramirez C."/>
            <person name="Shimmin L.C."/>
            <person name="Leggatt P."/>
            <person name="Matheson A.T."/>
        </authorList>
    </citation>
    <scope>NUCLEOTIDE SEQUENCE [GENOMIC DNA]</scope>
</reference>
<reference key="2">
    <citation type="journal article" date="1989" name="Can. J. Microbiol.">
        <title>Structure and evolution of the L11, L1, L10, and L12 equivalent ribosomal proteins in eubacteria, archaebacteria, and eucaryotes.</title>
        <authorList>
            <person name="Ramirez C."/>
            <person name="Shimmin L.C."/>
            <person name="Newton C.H."/>
            <person name="Matheson A.T."/>
            <person name="Dennis P.P."/>
        </authorList>
    </citation>
    <scope>NUCLEOTIDE SEQUENCE [GENOMIC DNA]</scope>
</reference>
<reference key="3">
    <citation type="journal article" date="1989" name="Can. J. Microbiol.">
        <authorList>
            <person name="Ramirez C."/>
            <person name="Shimmin L.C."/>
            <person name="Newton C.H."/>
            <person name="Matheson A.T."/>
            <person name="Dennis P.P."/>
        </authorList>
    </citation>
    <scope>ERRATUM OF PUBMED:2497941</scope>
</reference>
<reference key="4">
    <citation type="journal article" date="2005" name="J. Bacteriol.">
        <title>The genome of Sulfolobus acidocaldarius, a model organism of the Crenarchaeota.</title>
        <authorList>
            <person name="Chen L."/>
            <person name="Bruegger K."/>
            <person name="Skovgaard M."/>
            <person name="Redder P."/>
            <person name="She Q."/>
            <person name="Torarinsson E."/>
            <person name="Greve B."/>
            <person name="Awayez M."/>
            <person name="Zibat A."/>
            <person name="Klenk H.-P."/>
            <person name="Garrett R.A."/>
        </authorList>
    </citation>
    <scope>NUCLEOTIDE SEQUENCE [LARGE SCALE GENOMIC DNA]</scope>
    <source>
        <strain>ATCC 33909 / DSM 639 / JCM 8929 / NBRC 15157 / NCIMB 11770</strain>
    </source>
</reference>
<proteinExistence type="inferred from homology"/>
<organism>
    <name type="scientific">Sulfolobus acidocaldarius (strain ATCC 33909 / DSM 639 / JCM 8929 / NBRC 15157 / NCIMB 11770)</name>
    <dbReference type="NCBI Taxonomy" id="330779"/>
    <lineage>
        <taxon>Archaea</taxon>
        <taxon>Thermoproteota</taxon>
        <taxon>Thermoprotei</taxon>
        <taxon>Sulfolobales</taxon>
        <taxon>Sulfolobaceae</taxon>
        <taxon>Sulfolobus</taxon>
    </lineage>
</organism>
<dbReference type="EMBL" id="X59038">
    <property type="protein sequence ID" value="CAA41764.1"/>
    <property type="molecule type" value="Genomic_DNA"/>
</dbReference>
<dbReference type="EMBL" id="CP000077">
    <property type="protein sequence ID" value="AAY80778.1"/>
    <property type="molecule type" value="Genomic_DNA"/>
</dbReference>
<dbReference type="PIR" id="S53650">
    <property type="entry name" value="S53650"/>
</dbReference>
<dbReference type="RefSeq" id="WP_011278280.1">
    <property type="nucleotide sequence ID" value="NC_007181.1"/>
</dbReference>
<dbReference type="SMR" id="P35023"/>
<dbReference type="STRING" id="330779.Saci_1457"/>
<dbReference type="GeneID" id="14551952"/>
<dbReference type="KEGG" id="sai:Saci_1457"/>
<dbReference type="PATRIC" id="fig|330779.12.peg.1401"/>
<dbReference type="eggNOG" id="arCOG04288">
    <property type="taxonomic scope" value="Archaea"/>
</dbReference>
<dbReference type="HOGENOM" id="CLU_053173_0_0_2"/>
<dbReference type="Proteomes" id="UP000001018">
    <property type="component" value="Chromosome"/>
</dbReference>
<dbReference type="GO" id="GO:0022625">
    <property type="term" value="C:cytosolic large ribosomal subunit"/>
    <property type="evidence" value="ECO:0007669"/>
    <property type="project" value="TreeGrafter"/>
</dbReference>
<dbReference type="GO" id="GO:0070180">
    <property type="term" value="F:large ribosomal subunit rRNA binding"/>
    <property type="evidence" value="ECO:0007669"/>
    <property type="project" value="UniProtKB-UniRule"/>
</dbReference>
<dbReference type="GO" id="GO:0003735">
    <property type="term" value="F:structural constituent of ribosome"/>
    <property type="evidence" value="ECO:0007669"/>
    <property type="project" value="TreeGrafter"/>
</dbReference>
<dbReference type="GO" id="GO:0002181">
    <property type="term" value="P:cytoplasmic translation"/>
    <property type="evidence" value="ECO:0007669"/>
    <property type="project" value="TreeGrafter"/>
</dbReference>
<dbReference type="GO" id="GO:0000027">
    <property type="term" value="P:ribosomal large subunit assembly"/>
    <property type="evidence" value="ECO:0007669"/>
    <property type="project" value="TreeGrafter"/>
</dbReference>
<dbReference type="FunFam" id="3.90.105.20:FF:000001">
    <property type="entry name" value="60S acidic ribosomal protein P0"/>
    <property type="match status" value="1"/>
</dbReference>
<dbReference type="Gene3D" id="3.30.70.1730">
    <property type="match status" value="1"/>
</dbReference>
<dbReference type="Gene3D" id="3.90.105.20">
    <property type="match status" value="1"/>
</dbReference>
<dbReference type="Gene3D" id="6.10.140.760">
    <property type="match status" value="1"/>
</dbReference>
<dbReference type="HAMAP" id="MF_00280">
    <property type="entry name" value="Ribosomal_uL10_arch"/>
    <property type="match status" value="1"/>
</dbReference>
<dbReference type="InterPro" id="IPR050323">
    <property type="entry name" value="Ribosomal_protein_uL10"/>
</dbReference>
<dbReference type="InterPro" id="IPR001790">
    <property type="entry name" value="Ribosomal_uL10"/>
</dbReference>
<dbReference type="InterPro" id="IPR040637">
    <property type="entry name" value="Ribosomal_uL10-like_insert"/>
</dbReference>
<dbReference type="InterPro" id="IPR043164">
    <property type="entry name" value="Ribosomal_uL10-like_insert_sf"/>
</dbReference>
<dbReference type="InterPro" id="IPR043141">
    <property type="entry name" value="Ribosomal_uL10-like_sf"/>
</dbReference>
<dbReference type="InterPro" id="IPR022909">
    <property type="entry name" value="Ribosomal_uL10_arc"/>
</dbReference>
<dbReference type="NCBIfam" id="NF003095">
    <property type="entry name" value="PRK04019.1-1"/>
    <property type="match status" value="1"/>
</dbReference>
<dbReference type="PANTHER" id="PTHR45699">
    <property type="entry name" value="60S ACIDIC RIBOSOMAL PROTEIN P0"/>
    <property type="match status" value="1"/>
</dbReference>
<dbReference type="PANTHER" id="PTHR45699:SF3">
    <property type="entry name" value="LARGE RIBOSOMAL SUBUNIT PROTEIN UL10"/>
    <property type="match status" value="1"/>
</dbReference>
<dbReference type="Pfam" id="PF00466">
    <property type="entry name" value="Ribosomal_L10"/>
    <property type="match status" value="1"/>
</dbReference>
<dbReference type="Pfam" id="PF17777">
    <property type="entry name" value="RL10P_insert"/>
    <property type="match status" value="1"/>
</dbReference>
<dbReference type="SUPFAM" id="SSF160369">
    <property type="entry name" value="Ribosomal protein L10-like"/>
    <property type="match status" value="1"/>
</dbReference>
<protein>
    <recommendedName>
        <fullName evidence="1">Large ribosomal subunit protein uL10</fullName>
    </recommendedName>
    <alternativeName>
        <fullName evidence="3">50S ribosomal protein L10</fullName>
    </alternativeName>
    <alternativeName>
        <fullName evidence="1">Acidic ribosomal protein P0 homolog</fullName>
    </alternativeName>
    <alternativeName>
        <fullName>L10e</fullName>
    </alternativeName>
</protein>
<evidence type="ECO:0000255" key="1">
    <source>
        <dbReference type="HAMAP-Rule" id="MF_00280"/>
    </source>
</evidence>
<evidence type="ECO:0000256" key="2">
    <source>
        <dbReference type="SAM" id="MobiDB-lite"/>
    </source>
</evidence>
<evidence type="ECO:0000305" key="3"/>
<evidence type="ECO:0000305" key="4">
    <source>
    </source>
</evidence>
<gene>
    <name evidence="1" type="primary">rpl10</name>
    <name evidence="1" type="synonym">rplP0</name>
    <name type="ordered locus">Saci_1457</name>
</gene>
<feature type="chain" id="PRO_0000154806" description="Large ribosomal subunit protein uL10">
    <location>
        <begin position="1"/>
        <end position="335"/>
    </location>
</feature>
<feature type="region of interest" description="Disordered" evidence="2">
    <location>
        <begin position="300"/>
        <end position="335"/>
    </location>
</feature>
<feature type="compositionally biased region" description="Basic and acidic residues" evidence="2">
    <location>
        <begin position="305"/>
        <end position="321"/>
    </location>
</feature>
<feature type="compositionally biased region" description="Gly residues" evidence="2">
    <location>
        <begin position="326"/>
        <end position="335"/>
    </location>
</feature>
<name>RL10_SULAC</name>
<keyword id="KW-1185">Reference proteome</keyword>
<keyword id="KW-0687">Ribonucleoprotein</keyword>
<keyword id="KW-0689">Ribosomal protein</keyword>
<keyword id="KW-0694">RNA-binding</keyword>
<keyword id="KW-0699">rRNA-binding</keyword>
<sequence length="335" mass="36544">MIGLAVTTTKKIAKWKVDEVAELTEKLKTHKTIIIANIEGFPADKLHEIRKKLRGKADIKVTKNNLFNIALKNAGYDTKLFESYLTGPNAFIFTDTNPFELQLFLSKFKLKRYALPGDKADEEVVVPAGDTGIAAGPMLSVFGKLKIKTKVQDGKIHILQDTTVAKPGDEIPADIVPILQKLGIMPVYVKLNIKIAYDNGVIIPGDKLSINLDDYTNEIRKAHINAFAVATEIAYPEPKVLEFTATKAMRNALALASEIGYITQETAQAVFTKAVMKAYAVASSISGKVDLGVQIQAQPQVSEQAAEKKEEKKEEEKKGPSEEEIGGGLSSLFGG</sequence>
<accession>P35023</accession>
<accession>Q4J8V3</accession>
<comment type="function">
    <text evidence="1">Forms part of the ribosomal stalk, playing a central role in the interaction of the ribosome with GTP-bound translation factors.</text>
</comment>
<comment type="subunit">
    <text evidence="1">Part of the 50S ribosomal subunit. Forms part of the ribosomal stalk which helps the ribosome interact with GTP-bound translation factors. Forms a heptameric L10(L12)2(L12)2(L12)2 complex, where L10 forms an elongated spine to which the L12 dimers bind in a sequential fashion.</text>
</comment>
<comment type="miscellaneous">
    <text>Was called L10e in this organism; in this case 'e' is for E.coli-like, not eukaryotic-type protein.</text>
</comment>
<comment type="similarity">
    <text evidence="1">Belongs to the universal ribosomal protein uL10 family.</text>
</comment>
<comment type="caution">
    <text evidence="4">Was originally thought to originate from S.solfataricus strain P1, but the culture was contaminated with S.acidocaldarius.</text>
</comment>